<keyword id="KW-1003">Cell membrane</keyword>
<keyword id="KW-0472">Membrane</keyword>
<keyword id="KW-0762">Sugar transport</keyword>
<keyword id="KW-0812">Transmembrane</keyword>
<keyword id="KW-1133">Transmembrane helix</keyword>
<keyword id="KW-0813">Transport</keyword>
<organism>
    <name type="scientific">Staphylococcus aureus (strain Mu50 / ATCC 700699)</name>
    <dbReference type="NCBI Taxonomy" id="158878"/>
    <lineage>
        <taxon>Bacteria</taxon>
        <taxon>Bacillati</taxon>
        <taxon>Bacillota</taxon>
        <taxon>Bacilli</taxon>
        <taxon>Bacillales</taxon>
        <taxon>Staphylococcaceae</taxon>
        <taxon>Staphylococcus</taxon>
    </lineage>
</organism>
<accession>P60946</accession>
<accession>Q99WV5</accession>
<name>RBSU_STAAM</name>
<dbReference type="EMBL" id="BA000017">
    <property type="protein sequence ID" value="BAB56432.1"/>
    <property type="molecule type" value="Genomic_DNA"/>
</dbReference>
<dbReference type="RefSeq" id="WP_000029196.1">
    <property type="nucleotide sequence ID" value="NC_002758.2"/>
</dbReference>
<dbReference type="KEGG" id="sav:SAV0270"/>
<dbReference type="HOGENOM" id="CLU_076024_0_1_9"/>
<dbReference type="PhylomeDB" id="P60946"/>
<dbReference type="Proteomes" id="UP000002481">
    <property type="component" value="Chromosome"/>
</dbReference>
<dbReference type="GO" id="GO:0005886">
    <property type="term" value="C:plasma membrane"/>
    <property type="evidence" value="ECO:0007669"/>
    <property type="project" value="UniProtKB-SubCell"/>
</dbReference>
<dbReference type="GO" id="GO:0015144">
    <property type="term" value="F:carbohydrate transmembrane transporter activity"/>
    <property type="evidence" value="ECO:0007669"/>
    <property type="project" value="InterPro"/>
</dbReference>
<dbReference type="CDD" id="cd23111">
    <property type="entry name" value="ribose_uptake_RbsU"/>
    <property type="match status" value="1"/>
</dbReference>
<dbReference type="InterPro" id="IPR010651">
    <property type="entry name" value="Sugar_transport"/>
</dbReference>
<dbReference type="NCBIfam" id="NF047342">
    <property type="entry name" value="symport_RbsU"/>
    <property type="match status" value="1"/>
</dbReference>
<dbReference type="PANTHER" id="PTHR16119">
    <property type="entry name" value="TRANSMEMBRANE PROTEIN 144"/>
    <property type="match status" value="1"/>
</dbReference>
<dbReference type="PANTHER" id="PTHR16119:SF17">
    <property type="entry name" value="TRANSMEMBRANE PROTEIN 144"/>
    <property type="match status" value="1"/>
</dbReference>
<dbReference type="Pfam" id="PF06800">
    <property type="entry name" value="Sugar_transport"/>
    <property type="match status" value="1"/>
</dbReference>
<dbReference type="SUPFAM" id="SSF103481">
    <property type="entry name" value="Multidrug resistance efflux transporter EmrE"/>
    <property type="match status" value="1"/>
</dbReference>
<sequence length="293" mass="31273">MSIVALLIGLGPLIGWGFFPTVASKFGGKPVHQIIGATVGTLIFAIILAVVTSSGFPTGTNLLFALLSGAGWGFGQIITFKAFELIGSSRAMPVTTAFQLLGASLWGVFALGNWPGIGHKIIGFTALVVILIGARMTVWSERKEASNAKNLRRAVVLLLIGEFGYWLYSAAPQATSIDGLTAFLPQAMGMVIVAVIYGFMNMKSENPFRNKITWLQIISGFFFAFGALTYLISAQPNMNGLATGFILSQTSVVLATLTGIYFLKQHKTSKEMVITIIGLVLILVAASVTVFIK</sequence>
<reference key="1">
    <citation type="journal article" date="2001" name="Lancet">
        <title>Whole genome sequencing of meticillin-resistant Staphylococcus aureus.</title>
        <authorList>
            <person name="Kuroda M."/>
            <person name="Ohta T."/>
            <person name="Uchiyama I."/>
            <person name="Baba T."/>
            <person name="Yuzawa H."/>
            <person name="Kobayashi I."/>
            <person name="Cui L."/>
            <person name="Oguchi A."/>
            <person name="Aoki K."/>
            <person name="Nagai Y."/>
            <person name="Lian J.-Q."/>
            <person name="Ito T."/>
            <person name="Kanamori M."/>
            <person name="Matsumaru H."/>
            <person name="Maruyama A."/>
            <person name="Murakami H."/>
            <person name="Hosoyama A."/>
            <person name="Mizutani-Ui Y."/>
            <person name="Takahashi N.K."/>
            <person name="Sawano T."/>
            <person name="Inoue R."/>
            <person name="Kaito C."/>
            <person name="Sekimizu K."/>
            <person name="Hirakawa H."/>
            <person name="Kuhara S."/>
            <person name="Goto S."/>
            <person name="Yabuzaki J."/>
            <person name="Kanehisa M."/>
            <person name="Yamashita A."/>
            <person name="Oshima K."/>
            <person name="Furuya K."/>
            <person name="Yoshino C."/>
            <person name="Shiba T."/>
            <person name="Hattori M."/>
            <person name="Ogasawara N."/>
            <person name="Hayashi H."/>
            <person name="Hiramatsu K."/>
        </authorList>
    </citation>
    <scope>NUCLEOTIDE SEQUENCE [LARGE SCALE GENOMIC DNA]</scope>
    <source>
        <strain>Mu50 / ATCC 700699</strain>
    </source>
</reference>
<comment type="function">
    <text evidence="1">Could be involved in the uptake of ribose.</text>
</comment>
<comment type="subcellular location">
    <subcellularLocation>
        <location evidence="3">Cell membrane</location>
        <topology evidence="3">Multi-pass membrane protein</topology>
    </subcellularLocation>
</comment>
<comment type="similarity">
    <text evidence="3">Belongs to the GRP transporter (TC 2.A.7.5) family.</text>
</comment>
<gene>
    <name type="primary">rbsU</name>
    <name type="ordered locus">SAV0270</name>
</gene>
<protein>
    <recommendedName>
        <fullName>Putative ribose uptake protein RbsU</fullName>
    </recommendedName>
</protein>
<evidence type="ECO:0000250" key="1"/>
<evidence type="ECO:0000255" key="2"/>
<evidence type="ECO:0000305" key="3"/>
<proteinExistence type="inferred from homology"/>
<feature type="chain" id="PRO_0000213638" description="Putative ribose uptake protein RbsU">
    <location>
        <begin position="1"/>
        <end position="293"/>
    </location>
</feature>
<feature type="transmembrane region" description="Helical" evidence="2">
    <location>
        <begin position="2"/>
        <end position="24"/>
    </location>
</feature>
<feature type="transmembrane region" description="Helical" evidence="2">
    <location>
        <begin position="34"/>
        <end position="56"/>
    </location>
</feature>
<feature type="transmembrane region" description="Helical" evidence="2">
    <location>
        <begin position="63"/>
        <end position="80"/>
    </location>
</feature>
<feature type="transmembrane region" description="Helical" evidence="2">
    <location>
        <begin position="95"/>
        <end position="117"/>
    </location>
</feature>
<feature type="transmembrane region" description="Helical" evidence="2">
    <location>
        <begin position="122"/>
        <end position="139"/>
    </location>
</feature>
<feature type="transmembrane region" description="Helical" evidence="2">
    <location>
        <begin position="154"/>
        <end position="171"/>
    </location>
</feature>
<feature type="transmembrane region" description="Helical" evidence="2">
    <location>
        <begin position="180"/>
        <end position="202"/>
    </location>
</feature>
<feature type="transmembrane region" description="Helical" evidence="2">
    <location>
        <begin position="212"/>
        <end position="234"/>
    </location>
</feature>
<feature type="transmembrane region" description="Helical" evidence="2">
    <location>
        <begin position="241"/>
        <end position="263"/>
    </location>
</feature>
<feature type="transmembrane region" description="Helical" evidence="2">
    <location>
        <begin position="273"/>
        <end position="292"/>
    </location>
</feature>